<proteinExistence type="evidence at transcript level"/>
<organism>
    <name type="scientific">Homo sapiens</name>
    <name type="common">Human</name>
    <dbReference type="NCBI Taxonomy" id="9606"/>
    <lineage>
        <taxon>Eukaryota</taxon>
        <taxon>Metazoa</taxon>
        <taxon>Chordata</taxon>
        <taxon>Craniata</taxon>
        <taxon>Vertebrata</taxon>
        <taxon>Euteleostomi</taxon>
        <taxon>Mammalia</taxon>
        <taxon>Eutheria</taxon>
        <taxon>Euarchontoglires</taxon>
        <taxon>Primates</taxon>
        <taxon>Haplorrhini</taxon>
        <taxon>Catarrhini</taxon>
        <taxon>Hominidae</taxon>
        <taxon>Homo</taxon>
    </lineage>
</organism>
<sequence>MNLDGTSGGFPAEEDHHNEERQTKNKRKTKHRHKFSEELLQELKEIFGENCYPDYTTRKTLAIKFDCPVNVIDNWFQNKRARLPPAERRRIFVLQKKHDFPVQAHSFLSCQETQAAAHNYATKQSLSGAQRALMRRAGCSHLEKQWIPSQEMGYNCFSLENQETPSQQVGPQCSYLEKPGIPSQQVGSQCSYLEKLGIPSQQVASQSSYLVTGTEKHPGCAMGYGGDTGSGHSGSGHSTAYHFLSYNSAECLHPPPSSVPYFHGERTETKESQHASPFLLDYAQGAYGVKKDHCLCSFCLSLLGQQQQNDWQYHLQQHQQPQNYLEGMMLQEQLPMDSGPWDLGKQWSSAQSQLQSQLPQNNGKPLCSQLQHMSLQIAADSPLLPLGQDMQERASEQPRTQMQQL</sequence>
<gene>
    <name evidence="5" type="primary">CPHXL</name>
    <name type="synonym">CPHX1</name>
</gene>
<name>CPHXL_HUMAN</name>
<keyword id="KW-0010">Activator</keyword>
<keyword id="KW-0238">DNA-binding</keyword>
<keyword id="KW-0371">Homeobox</keyword>
<keyword id="KW-0539">Nucleus</keyword>
<keyword id="KW-1185">Reference proteome</keyword>
<keyword id="KW-0804">Transcription</keyword>
<keyword id="KW-0805">Transcription regulation</keyword>
<protein>
    <recommendedName>
        <fullName evidence="4">Cytoplasmic polyadenylated homeobox-like protein</fullName>
    </recommendedName>
    <alternativeName>
        <fullName>Cytoplasmic polyadenylated homeobox 1</fullName>
    </alternativeName>
</protein>
<feature type="chain" id="PRO_0000447307" description="Cytoplasmic polyadenylated homeobox-like protein">
    <location>
        <begin position="1"/>
        <end position="405"/>
    </location>
</feature>
<feature type="DNA-binding region" description="Homeobox" evidence="1">
    <location>
        <begin position="28"/>
        <end position="87"/>
    </location>
</feature>
<feature type="region of interest" description="Disordered" evidence="2">
    <location>
        <begin position="1"/>
        <end position="33"/>
    </location>
</feature>
<feature type="region of interest" description="Disordered" evidence="2">
    <location>
        <begin position="340"/>
        <end position="363"/>
    </location>
</feature>
<feature type="compositionally biased region" description="Basic and acidic residues" evidence="2">
    <location>
        <begin position="13"/>
        <end position="23"/>
    </location>
</feature>
<feature type="compositionally biased region" description="Basic residues" evidence="2">
    <location>
        <begin position="24"/>
        <end position="33"/>
    </location>
</feature>
<feature type="compositionally biased region" description="Low complexity" evidence="2">
    <location>
        <begin position="346"/>
        <end position="360"/>
    </location>
</feature>
<accession>A0A1W2PPM1</accession>
<evidence type="ECO:0000255" key="1">
    <source>
        <dbReference type="PROSITE-ProRule" id="PRU00108"/>
    </source>
</evidence>
<evidence type="ECO:0000256" key="2">
    <source>
        <dbReference type="SAM" id="MobiDB-lite"/>
    </source>
</evidence>
<evidence type="ECO:0000269" key="3">
    <source>
    </source>
</evidence>
<evidence type="ECO:0000305" key="4"/>
<evidence type="ECO:0000312" key="5">
    <source>
        <dbReference type="HGNC" id="HGNC:51815"/>
    </source>
</evidence>
<reference key="1">
    <citation type="journal article" date="2004" name="Nature">
        <title>The sequence and analysis of duplication-rich human chromosome 16.</title>
        <authorList>
            <person name="Martin J."/>
            <person name="Han C."/>
            <person name="Gordon L.A."/>
            <person name="Terry A."/>
            <person name="Prabhakar S."/>
            <person name="She X."/>
            <person name="Xie G."/>
            <person name="Hellsten U."/>
            <person name="Chan Y.M."/>
            <person name="Altherr M."/>
            <person name="Couronne O."/>
            <person name="Aerts A."/>
            <person name="Bajorek E."/>
            <person name="Black S."/>
            <person name="Blumer H."/>
            <person name="Branscomb E."/>
            <person name="Brown N.C."/>
            <person name="Bruno W.J."/>
            <person name="Buckingham J.M."/>
            <person name="Callen D.F."/>
            <person name="Campbell C.S."/>
            <person name="Campbell M.L."/>
            <person name="Campbell E.W."/>
            <person name="Caoile C."/>
            <person name="Challacombe J.F."/>
            <person name="Chasteen L.A."/>
            <person name="Chertkov O."/>
            <person name="Chi H.C."/>
            <person name="Christensen M."/>
            <person name="Clark L.M."/>
            <person name="Cohn J.D."/>
            <person name="Denys M."/>
            <person name="Detter J.C."/>
            <person name="Dickson M."/>
            <person name="Dimitrijevic-Bussod M."/>
            <person name="Escobar J."/>
            <person name="Fawcett J.J."/>
            <person name="Flowers D."/>
            <person name="Fotopulos D."/>
            <person name="Glavina T."/>
            <person name="Gomez M."/>
            <person name="Gonzales E."/>
            <person name="Goodstein D."/>
            <person name="Goodwin L.A."/>
            <person name="Grady D.L."/>
            <person name="Grigoriev I."/>
            <person name="Groza M."/>
            <person name="Hammon N."/>
            <person name="Hawkins T."/>
            <person name="Haydu L."/>
            <person name="Hildebrand C.E."/>
            <person name="Huang W."/>
            <person name="Israni S."/>
            <person name="Jett J."/>
            <person name="Jewett P.B."/>
            <person name="Kadner K."/>
            <person name="Kimball H."/>
            <person name="Kobayashi A."/>
            <person name="Krawczyk M.-C."/>
            <person name="Leyba T."/>
            <person name="Longmire J.L."/>
            <person name="Lopez F."/>
            <person name="Lou Y."/>
            <person name="Lowry S."/>
            <person name="Ludeman T."/>
            <person name="Manohar C.F."/>
            <person name="Mark G.A."/>
            <person name="McMurray K.L."/>
            <person name="Meincke L.J."/>
            <person name="Morgan J."/>
            <person name="Moyzis R.K."/>
            <person name="Mundt M.O."/>
            <person name="Munk A.C."/>
            <person name="Nandkeshwar R.D."/>
            <person name="Pitluck S."/>
            <person name="Pollard M."/>
            <person name="Predki P."/>
            <person name="Parson-Quintana B."/>
            <person name="Ramirez L."/>
            <person name="Rash S."/>
            <person name="Retterer J."/>
            <person name="Ricke D.O."/>
            <person name="Robinson D.L."/>
            <person name="Rodriguez A."/>
            <person name="Salamov A."/>
            <person name="Saunders E.H."/>
            <person name="Scott D."/>
            <person name="Shough T."/>
            <person name="Stallings R.L."/>
            <person name="Stalvey M."/>
            <person name="Sutherland R.D."/>
            <person name="Tapia R."/>
            <person name="Tesmer J.G."/>
            <person name="Thayer N."/>
            <person name="Thompson L.S."/>
            <person name="Tice H."/>
            <person name="Torney D.C."/>
            <person name="Tran-Gyamfi M."/>
            <person name="Tsai M."/>
            <person name="Ulanovsky L.E."/>
            <person name="Ustaszewska A."/>
            <person name="Vo N."/>
            <person name="White P.S."/>
            <person name="Williams A.L."/>
            <person name="Wills P.L."/>
            <person name="Wu J.-R."/>
            <person name="Wu K."/>
            <person name="Yang J."/>
            <person name="DeJong P."/>
            <person name="Bruce D."/>
            <person name="Doggett N.A."/>
            <person name="Deaven L."/>
            <person name="Schmutz J."/>
            <person name="Grimwood J."/>
            <person name="Richardson P."/>
            <person name="Rokhsar D.S."/>
            <person name="Eichler E.E."/>
            <person name="Gilna P."/>
            <person name="Lucas S.M."/>
            <person name="Myers R.M."/>
            <person name="Rubin E.M."/>
            <person name="Pennacchio L.A."/>
        </authorList>
    </citation>
    <scope>NUCLEOTIDE SEQUENCE [LARGE SCALE GENOMIC DNA]</scope>
</reference>
<reference key="2">
    <citation type="journal article" date="2016" name="Sci. Rep.">
        <title>Characterization and target genes of nine human PRD-like homeobox domain genes expressed exclusively in early embryos.</title>
        <authorList>
            <person name="Madissoon E."/>
            <person name="Jouhilahti E.M."/>
            <person name="Vesterlund L."/>
            <person name="Toehoenen V."/>
            <person name="Krjutskov K."/>
            <person name="Petropoulos S."/>
            <person name="Einarsdottir E."/>
            <person name="Linnarsson S."/>
            <person name="Lanner F."/>
            <person name="Maansson R."/>
            <person name="Hovatta O."/>
            <person name="Buerglin T.R."/>
            <person name="Katayama S."/>
            <person name="Kere J."/>
        </authorList>
    </citation>
    <scope>FUNCTION</scope>
    <scope>DEVELOPMENTAL STAGE</scope>
</reference>
<dbReference type="EMBL" id="AC009122">
    <property type="status" value="NOT_ANNOTATED_CDS"/>
    <property type="molecule type" value="Genomic_DNA"/>
</dbReference>
<dbReference type="EMBL" id="AC025287">
    <property type="status" value="NOT_ANNOTATED_CDS"/>
    <property type="molecule type" value="Genomic_DNA"/>
</dbReference>
<dbReference type="CCDS" id="CCDS86543.1"/>
<dbReference type="RefSeq" id="NP_001342542.1">
    <property type="nucleotide sequence ID" value="NM_001355613.1"/>
</dbReference>
<dbReference type="SMR" id="A0A1W2PPM1"/>
<dbReference type="FunCoup" id="A0A1W2PPM1">
    <property type="interactions" value="22"/>
</dbReference>
<dbReference type="STRING" id="9606.ENSP00000491599"/>
<dbReference type="BioMuta" id="ENSG00000283755"/>
<dbReference type="MassIVE" id="A0A1W2PPM1"/>
<dbReference type="Ensembl" id="ENST00000640559.2">
    <property type="protein sequence ID" value="ENSP00000491599.1"/>
    <property type="gene ID" value="ENSG00000283755.2"/>
</dbReference>
<dbReference type="GeneID" id="105371346"/>
<dbReference type="MANE-Select" id="ENST00000640559.2">
    <property type="protein sequence ID" value="ENSP00000491599.1"/>
    <property type="RefSeq nucleotide sequence ID" value="NM_001355613.1"/>
    <property type="RefSeq protein sequence ID" value="NP_001342542.1"/>
</dbReference>
<dbReference type="AGR" id="HGNC:51815"/>
<dbReference type="GeneCards" id="CPHXL"/>
<dbReference type="HGNC" id="HGNC:51815">
    <property type="gene designation" value="CPHXL"/>
</dbReference>
<dbReference type="HPA" id="ENSG00000283755">
    <property type="expression patterns" value="Not detected"/>
</dbReference>
<dbReference type="MIM" id="618700">
    <property type="type" value="gene"/>
</dbReference>
<dbReference type="neXtProt" id="NX_A0A1W2PPM1"/>
<dbReference type="VEuPathDB" id="HostDB:ENSG00000283755"/>
<dbReference type="GeneTree" id="ENSGT00520000058758"/>
<dbReference type="InParanoid" id="A0A1W2PPM1"/>
<dbReference type="OMA" id="IFGENCY"/>
<dbReference type="OrthoDB" id="6159439at2759"/>
<dbReference type="PAN-GO" id="A0A1W2PPM1">
    <property type="GO annotations" value="4 GO annotations based on evolutionary models"/>
</dbReference>
<dbReference type="PRO" id="PR:A0A1W2PPM1"/>
<dbReference type="Proteomes" id="UP000005640">
    <property type="component" value="Chromosome 16"/>
</dbReference>
<dbReference type="RNAct" id="A0A1W2PPM1">
    <property type="molecule type" value="protein"/>
</dbReference>
<dbReference type="Bgee" id="ENSG00000283755">
    <property type="expression patterns" value="Expressed in calcaneal tendon and 4 other cell types or tissues"/>
</dbReference>
<dbReference type="GO" id="GO:0005634">
    <property type="term" value="C:nucleus"/>
    <property type="evidence" value="ECO:0000318"/>
    <property type="project" value="GO_Central"/>
</dbReference>
<dbReference type="GO" id="GO:0000981">
    <property type="term" value="F:DNA-binding transcription factor activity, RNA polymerase II-specific"/>
    <property type="evidence" value="ECO:0000318"/>
    <property type="project" value="GO_Central"/>
</dbReference>
<dbReference type="GO" id="GO:0000978">
    <property type="term" value="F:RNA polymerase II cis-regulatory region sequence-specific DNA binding"/>
    <property type="evidence" value="ECO:0000318"/>
    <property type="project" value="GO_Central"/>
</dbReference>
<dbReference type="GO" id="GO:0006357">
    <property type="term" value="P:regulation of transcription by RNA polymerase II"/>
    <property type="evidence" value="ECO:0000318"/>
    <property type="project" value="GO_Central"/>
</dbReference>
<dbReference type="CDD" id="cd00086">
    <property type="entry name" value="homeodomain"/>
    <property type="match status" value="1"/>
</dbReference>
<dbReference type="Gene3D" id="1.10.10.60">
    <property type="entry name" value="Homeodomain-like"/>
    <property type="match status" value="1"/>
</dbReference>
<dbReference type="InterPro" id="IPR050720">
    <property type="entry name" value="Engrailed_Homeobox_TFs"/>
</dbReference>
<dbReference type="InterPro" id="IPR001356">
    <property type="entry name" value="HD"/>
</dbReference>
<dbReference type="InterPro" id="IPR009057">
    <property type="entry name" value="Homeodomain-like_sf"/>
</dbReference>
<dbReference type="PANTHER" id="PTHR24341:SF1">
    <property type="entry name" value="CYTOPLASMIC POLYADENYLATED HOMEOBOX-LIKE PROTEIN"/>
    <property type="match status" value="1"/>
</dbReference>
<dbReference type="PANTHER" id="PTHR24341">
    <property type="entry name" value="HOMEOBOX PROTEIN ENGRAILED"/>
    <property type="match status" value="1"/>
</dbReference>
<dbReference type="Pfam" id="PF00046">
    <property type="entry name" value="Homeodomain"/>
    <property type="match status" value="1"/>
</dbReference>
<dbReference type="SMART" id="SM00389">
    <property type="entry name" value="HOX"/>
    <property type="match status" value="1"/>
</dbReference>
<dbReference type="SUPFAM" id="SSF46689">
    <property type="entry name" value="Homeodomain-like"/>
    <property type="match status" value="1"/>
</dbReference>
<dbReference type="PROSITE" id="PS50071">
    <property type="entry name" value="HOMEOBOX_2"/>
    <property type="match status" value="1"/>
</dbReference>
<comment type="function">
    <text evidence="3">Transcription factor that acts as activator.</text>
</comment>
<comment type="subcellular location">
    <subcellularLocation>
        <location evidence="1">Nucleus</location>
    </subcellularLocation>
</comment>
<comment type="developmental stage">
    <text evidence="3">Expressed in single blastomeres from 8-cell stage embryos.</text>
</comment>